<sequence>MSRYRGPRFKKIRRLGALPGLTNKKPRAGSDLRNQSRSGKKSQYRIRLEEKQKLRFHYGLTERQLLKYVRIARKAKGSTGQVLLQLLEMRLDNILFRLGMASTIPAARQLVNHRHILVNGRIVDIPSYRCKPRDIITAKDEQKSKALIQISLDSSPHEELPNHLTLHPFQYKGLVNQIIDSKWVGLKINELLVVEYYSRQT</sequence>
<protein>
    <recommendedName>
        <fullName evidence="3">Small ribosomal subunit protein uS4c</fullName>
    </recommendedName>
    <alternativeName>
        <fullName>30S ribosomal protein S4, chloroplastic</fullName>
    </alternativeName>
</protein>
<keyword id="KW-0150">Chloroplast</keyword>
<keyword id="KW-0934">Plastid</keyword>
<keyword id="KW-0687">Ribonucleoprotein</keyword>
<keyword id="KW-0689">Ribosomal protein</keyword>
<keyword id="KW-0694">RNA-binding</keyword>
<keyword id="KW-0699">rRNA-binding</keyword>
<gene>
    <name type="primary">rps4</name>
</gene>
<reference key="1">
    <citation type="journal article" date="2006" name="Mol. Genet. Genomics">
        <title>The chloroplast genome of Nicotiana sylvestris and Nicotiana tomentosiformis: complete sequencing confirms that the Nicotiana sylvestris progenitor is the maternal genome donor of Nicotiana tabacum.</title>
        <authorList>
            <person name="Yukawa M."/>
            <person name="Tsudzuki T."/>
            <person name="Sugiura M."/>
        </authorList>
    </citation>
    <scope>NUCLEOTIDE SEQUENCE [LARGE SCALE GENOMIC DNA]</scope>
</reference>
<comment type="function">
    <text evidence="1">One of the primary rRNA binding proteins, it binds directly to 16S rRNA where it nucleates assembly of the body of the 30S subunit.</text>
</comment>
<comment type="function">
    <text evidence="1">With S5 and S12 plays an important role in translational accuracy.</text>
</comment>
<comment type="subunit">
    <text evidence="1">Part of the 30S ribosomal subunit. Contacts protein S5. The interaction surface between S4 and S5 is involved in control of translational fidelity (By similarity).</text>
</comment>
<comment type="subcellular location">
    <subcellularLocation>
        <location>Plastid</location>
        <location>Chloroplast</location>
    </subcellularLocation>
</comment>
<comment type="similarity">
    <text evidence="3">Belongs to the universal ribosomal protein uS4 family.</text>
</comment>
<name>RR4_NICTO</name>
<organism>
    <name type="scientific">Nicotiana tomentosiformis</name>
    <name type="common">Tobacco</name>
    <dbReference type="NCBI Taxonomy" id="4098"/>
    <lineage>
        <taxon>Eukaryota</taxon>
        <taxon>Viridiplantae</taxon>
        <taxon>Streptophyta</taxon>
        <taxon>Embryophyta</taxon>
        <taxon>Tracheophyta</taxon>
        <taxon>Spermatophyta</taxon>
        <taxon>Magnoliopsida</taxon>
        <taxon>eudicotyledons</taxon>
        <taxon>Gunneridae</taxon>
        <taxon>Pentapetalae</taxon>
        <taxon>asterids</taxon>
        <taxon>lamiids</taxon>
        <taxon>Solanales</taxon>
        <taxon>Solanaceae</taxon>
        <taxon>Nicotianoideae</taxon>
        <taxon>Nicotianeae</taxon>
        <taxon>Nicotiana</taxon>
    </lineage>
</organism>
<evidence type="ECO:0000250" key="1"/>
<evidence type="ECO:0000256" key="2">
    <source>
        <dbReference type="SAM" id="MobiDB-lite"/>
    </source>
</evidence>
<evidence type="ECO:0000305" key="3"/>
<feature type="chain" id="PRO_0000228952" description="Small ribosomal subunit protein uS4c">
    <location>
        <begin position="1"/>
        <end position="201"/>
    </location>
</feature>
<feature type="domain" description="S4 RNA-binding">
    <location>
        <begin position="89"/>
        <end position="150"/>
    </location>
</feature>
<feature type="region of interest" description="Disordered" evidence="2">
    <location>
        <begin position="20"/>
        <end position="44"/>
    </location>
</feature>
<accession>Q33C33</accession>
<proteinExistence type="inferred from homology"/>
<geneLocation type="chloroplast"/>
<dbReference type="EMBL" id="AB240139">
    <property type="protein sequence ID" value="BAE48002.1"/>
    <property type="molecule type" value="Genomic_DNA"/>
</dbReference>
<dbReference type="RefSeq" id="YP_398864.1">
    <property type="nucleotide sequence ID" value="NC_007602.1"/>
</dbReference>
<dbReference type="SMR" id="Q33C33"/>
<dbReference type="GeneID" id="3776390"/>
<dbReference type="KEGG" id="nto:3776390"/>
<dbReference type="OrthoDB" id="2443at2759"/>
<dbReference type="GO" id="GO:0009507">
    <property type="term" value="C:chloroplast"/>
    <property type="evidence" value="ECO:0007669"/>
    <property type="project" value="UniProtKB-SubCell"/>
</dbReference>
<dbReference type="GO" id="GO:0015935">
    <property type="term" value="C:small ribosomal subunit"/>
    <property type="evidence" value="ECO:0007669"/>
    <property type="project" value="InterPro"/>
</dbReference>
<dbReference type="GO" id="GO:0019843">
    <property type="term" value="F:rRNA binding"/>
    <property type="evidence" value="ECO:0007669"/>
    <property type="project" value="UniProtKB-UniRule"/>
</dbReference>
<dbReference type="GO" id="GO:0003735">
    <property type="term" value="F:structural constituent of ribosome"/>
    <property type="evidence" value="ECO:0007669"/>
    <property type="project" value="InterPro"/>
</dbReference>
<dbReference type="GO" id="GO:0042274">
    <property type="term" value="P:ribosomal small subunit biogenesis"/>
    <property type="evidence" value="ECO:0007669"/>
    <property type="project" value="TreeGrafter"/>
</dbReference>
<dbReference type="GO" id="GO:0006412">
    <property type="term" value="P:translation"/>
    <property type="evidence" value="ECO:0007669"/>
    <property type="project" value="UniProtKB-UniRule"/>
</dbReference>
<dbReference type="CDD" id="cd00165">
    <property type="entry name" value="S4"/>
    <property type="match status" value="1"/>
</dbReference>
<dbReference type="FunFam" id="1.10.1050.10:FF:000002">
    <property type="entry name" value="30S ribosomal protein S4, chloroplastic"/>
    <property type="match status" value="1"/>
</dbReference>
<dbReference type="FunFam" id="3.10.290.10:FF:000081">
    <property type="entry name" value="30S ribosomal protein S4, chloroplastic"/>
    <property type="match status" value="1"/>
</dbReference>
<dbReference type="Gene3D" id="1.10.1050.10">
    <property type="entry name" value="Ribosomal Protein S4 Delta 41, Chain A, domain 1"/>
    <property type="match status" value="1"/>
</dbReference>
<dbReference type="Gene3D" id="3.10.290.10">
    <property type="entry name" value="RNA-binding S4 domain"/>
    <property type="match status" value="1"/>
</dbReference>
<dbReference type="HAMAP" id="MF_01306_B">
    <property type="entry name" value="Ribosomal_uS4_B"/>
    <property type="match status" value="1"/>
</dbReference>
<dbReference type="InterPro" id="IPR022801">
    <property type="entry name" value="Ribosomal_uS4"/>
</dbReference>
<dbReference type="InterPro" id="IPR005709">
    <property type="entry name" value="Ribosomal_uS4_bac-type"/>
</dbReference>
<dbReference type="InterPro" id="IPR018079">
    <property type="entry name" value="Ribosomal_uS4_CS"/>
</dbReference>
<dbReference type="InterPro" id="IPR001912">
    <property type="entry name" value="Ribosomal_uS4_N"/>
</dbReference>
<dbReference type="InterPro" id="IPR002942">
    <property type="entry name" value="S4_RNA-bd"/>
</dbReference>
<dbReference type="InterPro" id="IPR036986">
    <property type="entry name" value="S4_RNA-bd_sf"/>
</dbReference>
<dbReference type="NCBIfam" id="NF003717">
    <property type="entry name" value="PRK05327.1"/>
    <property type="match status" value="1"/>
</dbReference>
<dbReference type="NCBIfam" id="TIGR01017">
    <property type="entry name" value="rpsD_bact"/>
    <property type="match status" value="1"/>
</dbReference>
<dbReference type="PANTHER" id="PTHR11831">
    <property type="entry name" value="30S 40S RIBOSOMAL PROTEIN"/>
    <property type="match status" value="1"/>
</dbReference>
<dbReference type="PANTHER" id="PTHR11831:SF4">
    <property type="entry name" value="SMALL RIBOSOMAL SUBUNIT PROTEIN US4M"/>
    <property type="match status" value="1"/>
</dbReference>
<dbReference type="Pfam" id="PF00163">
    <property type="entry name" value="Ribosomal_S4"/>
    <property type="match status" value="1"/>
</dbReference>
<dbReference type="Pfam" id="PF01479">
    <property type="entry name" value="S4"/>
    <property type="match status" value="1"/>
</dbReference>
<dbReference type="SMART" id="SM01390">
    <property type="entry name" value="Ribosomal_S4"/>
    <property type="match status" value="1"/>
</dbReference>
<dbReference type="SMART" id="SM00363">
    <property type="entry name" value="S4"/>
    <property type="match status" value="1"/>
</dbReference>
<dbReference type="SUPFAM" id="SSF55174">
    <property type="entry name" value="Alpha-L RNA-binding motif"/>
    <property type="match status" value="1"/>
</dbReference>
<dbReference type="PROSITE" id="PS00632">
    <property type="entry name" value="RIBOSOMAL_S4"/>
    <property type="match status" value="1"/>
</dbReference>
<dbReference type="PROSITE" id="PS50889">
    <property type="entry name" value="S4"/>
    <property type="match status" value="1"/>
</dbReference>